<organism>
    <name type="scientific">Dictyostelium discoideum</name>
    <name type="common">Social amoeba</name>
    <dbReference type="NCBI Taxonomy" id="44689"/>
    <lineage>
        <taxon>Eukaryota</taxon>
        <taxon>Amoebozoa</taxon>
        <taxon>Evosea</taxon>
        <taxon>Eumycetozoa</taxon>
        <taxon>Dictyostelia</taxon>
        <taxon>Dictyosteliales</taxon>
        <taxon>Dictyosteliaceae</taxon>
        <taxon>Dictyostelium</taxon>
    </lineage>
</organism>
<dbReference type="EMBL" id="AAFI02000030">
    <property type="protein sequence ID" value="EAL67797.1"/>
    <property type="molecule type" value="Genomic_DNA"/>
</dbReference>
<dbReference type="RefSeq" id="XP_641779.1">
    <property type="nucleotide sequence ID" value="XM_636687.1"/>
</dbReference>
<dbReference type="FunCoup" id="Q54WZ8">
    <property type="interactions" value="640"/>
</dbReference>
<dbReference type="PaxDb" id="44689-DDB0266576"/>
<dbReference type="EnsemblProtists" id="EAL67797">
    <property type="protein sequence ID" value="EAL67797"/>
    <property type="gene ID" value="DDB_G0279297"/>
</dbReference>
<dbReference type="GeneID" id="8621976"/>
<dbReference type="KEGG" id="ddi:DDB_G0279297"/>
<dbReference type="dictyBase" id="DDB_G0279297"/>
<dbReference type="HOGENOM" id="CLU_194865_0_0_1"/>
<dbReference type="InParanoid" id="Q54WZ8"/>
<dbReference type="PRO" id="PR:Q54WZ8"/>
<dbReference type="Proteomes" id="UP000002195">
    <property type="component" value="Chromosome 3"/>
</dbReference>
<sequence length="85" mass="8520">MAIFKSISSISNSTGSMGSSIGASNLDGFVSNDNSISCFDGCCGGGLGGWGGFNGLGGFNGGCGGSNTNIINLDIDIGRRRRRCC</sequence>
<proteinExistence type="inferred from homology"/>
<protein>
    <recommendedName>
        <fullName>UPF0512 protein R</fullName>
    </recommendedName>
</protein>
<feature type="chain" id="PRO_0000317356" description="UPF0512 protein R">
    <location>
        <begin position="1"/>
        <end position="85"/>
    </location>
</feature>
<reference key="1">
    <citation type="journal article" date="2005" name="Nature">
        <title>The genome of the social amoeba Dictyostelium discoideum.</title>
        <authorList>
            <person name="Eichinger L."/>
            <person name="Pachebat J.A."/>
            <person name="Gloeckner G."/>
            <person name="Rajandream M.A."/>
            <person name="Sucgang R."/>
            <person name="Berriman M."/>
            <person name="Song J."/>
            <person name="Olsen R."/>
            <person name="Szafranski K."/>
            <person name="Xu Q."/>
            <person name="Tunggal B."/>
            <person name="Kummerfeld S."/>
            <person name="Madera M."/>
            <person name="Konfortov B.A."/>
            <person name="Rivero F."/>
            <person name="Bankier A.T."/>
            <person name="Lehmann R."/>
            <person name="Hamlin N."/>
            <person name="Davies R."/>
            <person name="Gaudet P."/>
            <person name="Fey P."/>
            <person name="Pilcher K."/>
            <person name="Chen G."/>
            <person name="Saunders D."/>
            <person name="Sodergren E.J."/>
            <person name="Davis P."/>
            <person name="Kerhornou A."/>
            <person name="Nie X."/>
            <person name="Hall N."/>
            <person name="Anjard C."/>
            <person name="Hemphill L."/>
            <person name="Bason N."/>
            <person name="Farbrother P."/>
            <person name="Desany B."/>
            <person name="Just E."/>
            <person name="Morio T."/>
            <person name="Rost R."/>
            <person name="Churcher C.M."/>
            <person name="Cooper J."/>
            <person name="Haydock S."/>
            <person name="van Driessche N."/>
            <person name="Cronin A."/>
            <person name="Goodhead I."/>
            <person name="Muzny D.M."/>
            <person name="Mourier T."/>
            <person name="Pain A."/>
            <person name="Lu M."/>
            <person name="Harper D."/>
            <person name="Lindsay R."/>
            <person name="Hauser H."/>
            <person name="James K.D."/>
            <person name="Quiles M."/>
            <person name="Madan Babu M."/>
            <person name="Saito T."/>
            <person name="Buchrieser C."/>
            <person name="Wardroper A."/>
            <person name="Felder M."/>
            <person name="Thangavelu M."/>
            <person name="Johnson D."/>
            <person name="Knights A."/>
            <person name="Loulseged H."/>
            <person name="Mungall K.L."/>
            <person name="Oliver K."/>
            <person name="Price C."/>
            <person name="Quail M.A."/>
            <person name="Urushihara H."/>
            <person name="Hernandez J."/>
            <person name="Rabbinowitsch E."/>
            <person name="Steffen D."/>
            <person name="Sanders M."/>
            <person name="Ma J."/>
            <person name="Kohara Y."/>
            <person name="Sharp S."/>
            <person name="Simmonds M.N."/>
            <person name="Spiegler S."/>
            <person name="Tivey A."/>
            <person name="Sugano S."/>
            <person name="White B."/>
            <person name="Walker D."/>
            <person name="Woodward J.R."/>
            <person name="Winckler T."/>
            <person name="Tanaka Y."/>
            <person name="Shaulsky G."/>
            <person name="Schleicher M."/>
            <person name="Weinstock G.M."/>
            <person name="Rosenthal A."/>
            <person name="Cox E.C."/>
            <person name="Chisholm R.L."/>
            <person name="Gibbs R.A."/>
            <person name="Loomis W.F."/>
            <person name="Platzer M."/>
            <person name="Kay R.R."/>
            <person name="Williams J.G."/>
            <person name="Dear P.H."/>
            <person name="Noegel A.A."/>
            <person name="Barrell B.G."/>
            <person name="Kuspa A."/>
        </authorList>
    </citation>
    <scope>NUCLEOTIDE SEQUENCE [LARGE SCALE GENOMIC DNA]</scope>
    <source>
        <strain>AX4</strain>
    </source>
</reference>
<comment type="similarity">
    <text evidence="1">Belongs to the UPF0512 family.</text>
</comment>
<evidence type="ECO:0000305" key="1"/>
<keyword id="KW-1185">Reference proteome</keyword>
<gene>
    <name type="ORF">DDB_G0279297</name>
</gene>
<accession>Q54WZ8</accession>
<name>U512R_DICDI</name>